<evidence type="ECO:0000255" key="1">
    <source>
        <dbReference type="HAMAP-Rule" id="MF_01356"/>
    </source>
</evidence>
<evidence type="ECO:0000256" key="2">
    <source>
        <dbReference type="SAM" id="MobiDB-lite"/>
    </source>
</evidence>
<gene>
    <name evidence="1" type="primary">ndhK</name>
    <name type="ordered locus">P9211_03191</name>
</gene>
<feature type="chain" id="PRO_0000358450" description="NAD(P)H-quinone oxidoreductase subunit K">
    <location>
        <begin position="1"/>
        <end position="252"/>
    </location>
</feature>
<feature type="region of interest" description="Disordered" evidence="2">
    <location>
        <begin position="225"/>
        <end position="252"/>
    </location>
</feature>
<feature type="compositionally biased region" description="Polar residues" evidence="2">
    <location>
        <begin position="225"/>
        <end position="236"/>
    </location>
</feature>
<feature type="binding site" evidence="1">
    <location>
        <position position="73"/>
    </location>
    <ligand>
        <name>[4Fe-4S] cluster</name>
        <dbReference type="ChEBI" id="CHEBI:49883"/>
    </ligand>
</feature>
<feature type="binding site" evidence="1">
    <location>
        <position position="74"/>
    </location>
    <ligand>
        <name>[4Fe-4S] cluster</name>
        <dbReference type="ChEBI" id="CHEBI:49883"/>
    </ligand>
</feature>
<feature type="binding site" evidence="1">
    <location>
        <position position="138"/>
    </location>
    <ligand>
        <name>[4Fe-4S] cluster</name>
        <dbReference type="ChEBI" id="CHEBI:49883"/>
    </ligand>
</feature>
<feature type="binding site" evidence="1">
    <location>
        <position position="169"/>
    </location>
    <ligand>
        <name>[4Fe-4S] cluster</name>
        <dbReference type="ChEBI" id="CHEBI:49883"/>
    </ligand>
</feature>
<proteinExistence type="inferred from homology"/>
<keyword id="KW-0004">4Fe-4S</keyword>
<keyword id="KW-0408">Iron</keyword>
<keyword id="KW-0411">Iron-sulfur</keyword>
<keyword id="KW-0472">Membrane</keyword>
<keyword id="KW-0479">Metal-binding</keyword>
<keyword id="KW-0520">NAD</keyword>
<keyword id="KW-0521">NADP</keyword>
<keyword id="KW-0618">Plastoquinone</keyword>
<keyword id="KW-0874">Quinone</keyword>
<keyword id="KW-1185">Reference proteome</keyword>
<keyword id="KW-0793">Thylakoid</keyword>
<keyword id="KW-1278">Translocase</keyword>
<keyword id="KW-0813">Transport</keyword>
<reference key="1">
    <citation type="journal article" date="2007" name="PLoS Genet.">
        <title>Patterns and implications of gene gain and loss in the evolution of Prochlorococcus.</title>
        <authorList>
            <person name="Kettler G.C."/>
            <person name="Martiny A.C."/>
            <person name="Huang K."/>
            <person name="Zucker J."/>
            <person name="Coleman M.L."/>
            <person name="Rodrigue S."/>
            <person name="Chen F."/>
            <person name="Lapidus A."/>
            <person name="Ferriera S."/>
            <person name="Johnson J."/>
            <person name="Steglich C."/>
            <person name="Church G.M."/>
            <person name="Richardson P."/>
            <person name="Chisholm S.W."/>
        </authorList>
    </citation>
    <scope>NUCLEOTIDE SEQUENCE [LARGE SCALE GENOMIC DNA]</scope>
    <source>
        <strain>MIT 9211</strain>
    </source>
</reference>
<dbReference type="EC" id="7.1.1.-" evidence="1"/>
<dbReference type="EMBL" id="CP000878">
    <property type="protein sequence ID" value="ABX08250.1"/>
    <property type="molecule type" value="Genomic_DNA"/>
</dbReference>
<dbReference type="SMR" id="A9BDU0"/>
<dbReference type="STRING" id="93059.P9211_03191"/>
<dbReference type="KEGG" id="pmj:P9211_03191"/>
<dbReference type="eggNOG" id="COG0377">
    <property type="taxonomic scope" value="Bacteria"/>
</dbReference>
<dbReference type="HOGENOM" id="CLU_055737_2_1_3"/>
<dbReference type="Proteomes" id="UP000000788">
    <property type="component" value="Chromosome"/>
</dbReference>
<dbReference type="GO" id="GO:0031676">
    <property type="term" value="C:plasma membrane-derived thylakoid membrane"/>
    <property type="evidence" value="ECO:0007669"/>
    <property type="project" value="UniProtKB-SubCell"/>
</dbReference>
<dbReference type="GO" id="GO:0045271">
    <property type="term" value="C:respiratory chain complex I"/>
    <property type="evidence" value="ECO:0007669"/>
    <property type="project" value="TreeGrafter"/>
</dbReference>
<dbReference type="GO" id="GO:0051539">
    <property type="term" value="F:4 iron, 4 sulfur cluster binding"/>
    <property type="evidence" value="ECO:0007669"/>
    <property type="project" value="UniProtKB-KW"/>
</dbReference>
<dbReference type="GO" id="GO:0005506">
    <property type="term" value="F:iron ion binding"/>
    <property type="evidence" value="ECO:0007669"/>
    <property type="project" value="UniProtKB-UniRule"/>
</dbReference>
<dbReference type="GO" id="GO:0008137">
    <property type="term" value="F:NADH dehydrogenase (ubiquinone) activity"/>
    <property type="evidence" value="ECO:0007669"/>
    <property type="project" value="InterPro"/>
</dbReference>
<dbReference type="GO" id="GO:0048038">
    <property type="term" value="F:quinone binding"/>
    <property type="evidence" value="ECO:0007669"/>
    <property type="project" value="UniProtKB-KW"/>
</dbReference>
<dbReference type="GO" id="GO:0009060">
    <property type="term" value="P:aerobic respiration"/>
    <property type="evidence" value="ECO:0007669"/>
    <property type="project" value="TreeGrafter"/>
</dbReference>
<dbReference type="GO" id="GO:0015990">
    <property type="term" value="P:electron transport coupled proton transport"/>
    <property type="evidence" value="ECO:0007669"/>
    <property type="project" value="TreeGrafter"/>
</dbReference>
<dbReference type="GO" id="GO:0019684">
    <property type="term" value="P:photosynthesis, light reaction"/>
    <property type="evidence" value="ECO:0007669"/>
    <property type="project" value="UniProtKB-UniRule"/>
</dbReference>
<dbReference type="FunFam" id="3.40.50.12280:FF:000003">
    <property type="entry name" value="NAD(P)H-quinone oxidoreductase subunit K, chloroplastic"/>
    <property type="match status" value="1"/>
</dbReference>
<dbReference type="Gene3D" id="3.40.50.12280">
    <property type="match status" value="1"/>
</dbReference>
<dbReference type="HAMAP" id="MF_01356">
    <property type="entry name" value="NDH1_NuoB"/>
    <property type="match status" value="1"/>
</dbReference>
<dbReference type="InterPro" id="IPR006137">
    <property type="entry name" value="NADH_UbQ_OxRdtase-like_20kDa"/>
</dbReference>
<dbReference type="InterPro" id="IPR006138">
    <property type="entry name" value="NADH_UQ_OxRdtase_20Kd_su"/>
</dbReference>
<dbReference type="NCBIfam" id="TIGR01957">
    <property type="entry name" value="nuoB_fam"/>
    <property type="match status" value="1"/>
</dbReference>
<dbReference type="NCBIfam" id="NF005012">
    <property type="entry name" value="PRK06411.1"/>
    <property type="match status" value="1"/>
</dbReference>
<dbReference type="PANTHER" id="PTHR11995">
    <property type="entry name" value="NADH DEHYDROGENASE"/>
    <property type="match status" value="1"/>
</dbReference>
<dbReference type="PANTHER" id="PTHR11995:SF14">
    <property type="entry name" value="NADH DEHYDROGENASE [UBIQUINONE] IRON-SULFUR PROTEIN 7, MITOCHONDRIAL"/>
    <property type="match status" value="1"/>
</dbReference>
<dbReference type="Pfam" id="PF01058">
    <property type="entry name" value="Oxidored_q6"/>
    <property type="match status" value="1"/>
</dbReference>
<dbReference type="SUPFAM" id="SSF56770">
    <property type="entry name" value="HydA/Nqo6-like"/>
    <property type="match status" value="1"/>
</dbReference>
<dbReference type="PROSITE" id="PS01150">
    <property type="entry name" value="COMPLEX1_20K"/>
    <property type="match status" value="1"/>
</dbReference>
<comment type="function">
    <text evidence="1">NDH-1 shuttles electrons from an unknown electron donor, via FMN and iron-sulfur (Fe-S) centers, to quinones in the respiratory and/or the photosynthetic chain. The immediate electron acceptor for the enzyme in this species is believed to be plastoquinone. Couples the redox reaction to proton translocation, and thus conserves the redox energy in a proton gradient. Cyanobacterial NDH-1 also plays a role in inorganic carbon-concentration.</text>
</comment>
<comment type="catalytic activity">
    <reaction evidence="1">
        <text>a plastoquinone + NADH + (n+1) H(+)(in) = a plastoquinol + NAD(+) + n H(+)(out)</text>
        <dbReference type="Rhea" id="RHEA:42608"/>
        <dbReference type="Rhea" id="RHEA-COMP:9561"/>
        <dbReference type="Rhea" id="RHEA-COMP:9562"/>
        <dbReference type="ChEBI" id="CHEBI:15378"/>
        <dbReference type="ChEBI" id="CHEBI:17757"/>
        <dbReference type="ChEBI" id="CHEBI:57540"/>
        <dbReference type="ChEBI" id="CHEBI:57945"/>
        <dbReference type="ChEBI" id="CHEBI:62192"/>
    </reaction>
</comment>
<comment type="catalytic activity">
    <reaction evidence="1">
        <text>a plastoquinone + NADPH + (n+1) H(+)(in) = a plastoquinol + NADP(+) + n H(+)(out)</text>
        <dbReference type="Rhea" id="RHEA:42612"/>
        <dbReference type="Rhea" id="RHEA-COMP:9561"/>
        <dbReference type="Rhea" id="RHEA-COMP:9562"/>
        <dbReference type="ChEBI" id="CHEBI:15378"/>
        <dbReference type="ChEBI" id="CHEBI:17757"/>
        <dbReference type="ChEBI" id="CHEBI:57783"/>
        <dbReference type="ChEBI" id="CHEBI:58349"/>
        <dbReference type="ChEBI" id="CHEBI:62192"/>
    </reaction>
</comment>
<comment type="cofactor">
    <cofactor evidence="1">
        <name>[4Fe-4S] cluster</name>
        <dbReference type="ChEBI" id="CHEBI:49883"/>
    </cofactor>
    <text evidence="1">Binds 1 [4Fe-4S] cluster.</text>
</comment>
<comment type="subunit">
    <text evidence="1">NDH-1 can be composed of about 15 different subunits; different subcomplexes with different compositions have been identified which probably have different functions.</text>
</comment>
<comment type="subcellular location">
    <subcellularLocation>
        <location evidence="1">Cellular thylakoid membrane</location>
        <topology evidence="1">Peripheral membrane protein</topology>
        <orientation evidence="1">Cytoplasmic side</orientation>
    </subcellularLocation>
</comment>
<comment type="similarity">
    <text evidence="1">Belongs to the complex I 20 kDa subunit family.</text>
</comment>
<organism>
    <name type="scientific">Prochlorococcus marinus (strain MIT 9211)</name>
    <dbReference type="NCBI Taxonomy" id="93059"/>
    <lineage>
        <taxon>Bacteria</taxon>
        <taxon>Bacillati</taxon>
        <taxon>Cyanobacteriota</taxon>
        <taxon>Cyanophyceae</taxon>
        <taxon>Synechococcales</taxon>
        <taxon>Prochlorococcaceae</taxon>
        <taxon>Prochlorococcus</taxon>
    </lineage>
</organism>
<sequence>MHGAKVHLNGANPLTDLPSINAVRDIREATCGPVGAPNVTNELSENIILTSLDDLHNWARLSSLWPLLYGTACCFIEFAALIGSRFDFDRFGLVPRSSPRQADLLIVAGTVTMKMAPALVRLYEQMPDPKYVIAMGACTITGGMFSADSTTAVRGVDKLIPVDLYLPGCPPRPEAIFDAVIKLRKKVGNESFQEREKMLQKHRYFSVPHKMKRVQSQVTGAYLNASTQKQALSPSQEIPLEDQNEATKEIAQ</sequence>
<accession>A9BDU0</accession>
<name>NDHK_PROM4</name>
<protein>
    <recommendedName>
        <fullName evidence="1">NAD(P)H-quinone oxidoreductase subunit K</fullName>
        <ecNumber evidence="1">7.1.1.-</ecNumber>
    </recommendedName>
    <alternativeName>
        <fullName evidence="1">NAD(P)H dehydrogenase I subunit K</fullName>
    </alternativeName>
    <alternativeName>
        <fullName evidence="1">NDH-1 subunit K</fullName>
        <shortName evidence="1">NDH-K</shortName>
    </alternativeName>
</protein>